<gene>
    <name evidence="1" type="primary">rlmH</name>
    <name type="ordered locus">CGSHiEE_03145</name>
</gene>
<comment type="function">
    <text evidence="1">Specifically methylates the pseudouridine at position 1915 (m3Psi1915) in 23S rRNA.</text>
</comment>
<comment type="catalytic activity">
    <reaction evidence="1">
        <text>pseudouridine(1915) in 23S rRNA + S-adenosyl-L-methionine = N(3)-methylpseudouridine(1915) in 23S rRNA + S-adenosyl-L-homocysteine + H(+)</text>
        <dbReference type="Rhea" id="RHEA:42752"/>
        <dbReference type="Rhea" id="RHEA-COMP:10221"/>
        <dbReference type="Rhea" id="RHEA-COMP:10222"/>
        <dbReference type="ChEBI" id="CHEBI:15378"/>
        <dbReference type="ChEBI" id="CHEBI:57856"/>
        <dbReference type="ChEBI" id="CHEBI:59789"/>
        <dbReference type="ChEBI" id="CHEBI:65314"/>
        <dbReference type="ChEBI" id="CHEBI:74486"/>
        <dbReference type="EC" id="2.1.1.177"/>
    </reaction>
</comment>
<comment type="subunit">
    <text evidence="1">Homodimer.</text>
</comment>
<comment type="subcellular location">
    <subcellularLocation>
        <location evidence="1">Cytoplasm</location>
    </subcellularLocation>
</comment>
<comment type="similarity">
    <text evidence="1">Belongs to the RNA methyltransferase RlmH family.</text>
</comment>
<organism>
    <name type="scientific">Haemophilus influenzae (strain PittEE)</name>
    <dbReference type="NCBI Taxonomy" id="374930"/>
    <lineage>
        <taxon>Bacteria</taxon>
        <taxon>Pseudomonadati</taxon>
        <taxon>Pseudomonadota</taxon>
        <taxon>Gammaproteobacteria</taxon>
        <taxon>Pasteurellales</taxon>
        <taxon>Pasteurellaceae</taxon>
        <taxon>Haemophilus</taxon>
    </lineage>
</organism>
<keyword id="KW-0963">Cytoplasm</keyword>
<keyword id="KW-0489">Methyltransferase</keyword>
<keyword id="KW-0698">rRNA processing</keyword>
<keyword id="KW-0949">S-adenosyl-L-methionine</keyword>
<keyword id="KW-0808">Transferase</keyword>
<feature type="chain" id="PRO_1000061787" description="Ribosomal RNA large subunit methyltransferase H">
    <location>
        <begin position="1"/>
        <end position="155"/>
    </location>
</feature>
<feature type="binding site" evidence="1">
    <location>
        <position position="72"/>
    </location>
    <ligand>
        <name>S-adenosyl-L-methionine</name>
        <dbReference type="ChEBI" id="CHEBI:59789"/>
    </ligand>
</feature>
<feature type="binding site" evidence="1">
    <location>
        <position position="103"/>
    </location>
    <ligand>
        <name>S-adenosyl-L-methionine</name>
        <dbReference type="ChEBI" id="CHEBI:59789"/>
    </ligand>
</feature>
<feature type="binding site" evidence="1">
    <location>
        <begin position="122"/>
        <end position="127"/>
    </location>
    <ligand>
        <name>S-adenosyl-L-methionine</name>
        <dbReference type="ChEBI" id="CHEBI:59789"/>
    </ligand>
</feature>
<sequence>MKITLIAVGTKMPSWVTTGFEEYQRRFPKDMPFELIEIPAGKRGKNADIKRILEQEGKAMLAACGKGKVVTLDIPGKPWTTPQLAEQLEAWKNDGRDVCLLIGGPEGLSPECKAVAEQSWSLSPLTLPHPLVRVVVAESLYRAWSLTTNHPYHRE</sequence>
<evidence type="ECO:0000255" key="1">
    <source>
        <dbReference type="HAMAP-Rule" id="MF_00658"/>
    </source>
</evidence>
<protein>
    <recommendedName>
        <fullName evidence="1">Ribosomal RNA large subunit methyltransferase H</fullName>
        <ecNumber evidence="1">2.1.1.177</ecNumber>
    </recommendedName>
    <alternativeName>
        <fullName evidence="1">23S rRNA (pseudouridine1915-N3)-methyltransferase</fullName>
    </alternativeName>
    <alternativeName>
        <fullName evidence="1">23S rRNA m3Psi1915 methyltransferase</fullName>
    </alternativeName>
    <alternativeName>
        <fullName evidence="1">rRNA (pseudouridine-N3-)-methyltransferase RlmH</fullName>
    </alternativeName>
</protein>
<dbReference type="EC" id="2.1.1.177" evidence="1"/>
<dbReference type="EMBL" id="CP000671">
    <property type="protein sequence ID" value="ABQ98056.1"/>
    <property type="molecule type" value="Genomic_DNA"/>
</dbReference>
<dbReference type="SMR" id="A5UBA5"/>
<dbReference type="KEGG" id="hip:CGSHiEE_03145"/>
<dbReference type="HOGENOM" id="CLU_100552_1_0_6"/>
<dbReference type="GO" id="GO:0005737">
    <property type="term" value="C:cytoplasm"/>
    <property type="evidence" value="ECO:0007669"/>
    <property type="project" value="UniProtKB-SubCell"/>
</dbReference>
<dbReference type="GO" id="GO:0070038">
    <property type="term" value="F:rRNA (pseudouridine-N3-)-methyltransferase activity"/>
    <property type="evidence" value="ECO:0007669"/>
    <property type="project" value="UniProtKB-UniRule"/>
</dbReference>
<dbReference type="CDD" id="cd18081">
    <property type="entry name" value="RlmH-like"/>
    <property type="match status" value="1"/>
</dbReference>
<dbReference type="Gene3D" id="3.40.1280.10">
    <property type="match status" value="1"/>
</dbReference>
<dbReference type="HAMAP" id="MF_00658">
    <property type="entry name" value="23SrRNA_methyltr_H"/>
    <property type="match status" value="1"/>
</dbReference>
<dbReference type="InterPro" id="IPR029028">
    <property type="entry name" value="Alpha/beta_knot_MTases"/>
</dbReference>
<dbReference type="InterPro" id="IPR003742">
    <property type="entry name" value="RlmH-like"/>
</dbReference>
<dbReference type="InterPro" id="IPR029026">
    <property type="entry name" value="tRNA_m1G_MTases_N"/>
</dbReference>
<dbReference type="NCBIfam" id="NF000984">
    <property type="entry name" value="PRK00103.1-1"/>
    <property type="match status" value="1"/>
</dbReference>
<dbReference type="NCBIfam" id="NF000986">
    <property type="entry name" value="PRK00103.1-4"/>
    <property type="match status" value="1"/>
</dbReference>
<dbReference type="NCBIfam" id="TIGR00246">
    <property type="entry name" value="tRNA_RlmH_YbeA"/>
    <property type="match status" value="1"/>
</dbReference>
<dbReference type="PANTHER" id="PTHR33603">
    <property type="entry name" value="METHYLTRANSFERASE"/>
    <property type="match status" value="1"/>
</dbReference>
<dbReference type="PANTHER" id="PTHR33603:SF1">
    <property type="entry name" value="RIBOSOMAL RNA LARGE SUBUNIT METHYLTRANSFERASE H"/>
    <property type="match status" value="1"/>
</dbReference>
<dbReference type="Pfam" id="PF02590">
    <property type="entry name" value="SPOUT_MTase"/>
    <property type="match status" value="1"/>
</dbReference>
<dbReference type="PIRSF" id="PIRSF004505">
    <property type="entry name" value="MT_bac"/>
    <property type="match status" value="1"/>
</dbReference>
<dbReference type="SUPFAM" id="SSF75217">
    <property type="entry name" value="alpha/beta knot"/>
    <property type="match status" value="1"/>
</dbReference>
<name>RLMH_HAEIE</name>
<accession>A5UBA5</accession>
<reference key="1">
    <citation type="journal article" date="2007" name="Genome Biol.">
        <title>Characterization and modeling of the Haemophilus influenzae core and supragenomes based on the complete genomic sequences of Rd and 12 clinical nontypeable strains.</title>
        <authorList>
            <person name="Hogg J.S."/>
            <person name="Hu F.Z."/>
            <person name="Janto B."/>
            <person name="Boissy R."/>
            <person name="Hayes J."/>
            <person name="Keefe R."/>
            <person name="Post J.C."/>
            <person name="Ehrlich G.D."/>
        </authorList>
    </citation>
    <scope>NUCLEOTIDE SEQUENCE [LARGE SCALE GENOMIC DNA]</scope>
    <source>
        <strain>PittEE</strain>
    </source>
</reference>
<proteinExistence type="inferred from homology"/>